<organism>
    <name type="scientific">Epstein-Barr virus (strain P3HR-1)</name>
    <name type="common">HHV-4</name>
    <name type="synonym">Human herpesvirus 4</name>
    <dbReference type="NCBI Taxonomy" id="82829"/>
    <lineage>
        <taxon>Viruses</taxon>
        <taxon>Duplodnaviria</taxon>
        <taxon>Heunggongvirae</taxon>
        <taxon>Peploviricota</taxon>
        <taxon>Herviviricetes</taxon>
        <taxon>Herpesvirales</taxon>
        <taxon>Orthoherpesviridae</taxon>
        <taxon>Gammaherpesvirinae</taxon>
        <taxon>Lymphocryptovirus</taxon>
        <taxon>Lymphocryptovirus humangamma4</taxon>
        <taxon>Epstein-Barr virus (strain GD1)</taxon>
    </lineage>
</organism>
<name>YLR3_EBVP3</name>
<organismHost>
    <name type="scientific">Homo sapiens</name>
    <name type="common">Human</name>
    <dbReference type="NCBI Taxonomy" id="9606"/>
</organismHost>
<sequence>MDKDRPGLPAPDDNIEEVPSTSGVQERASEGDWENVLIEISDSSSEEEAEDAHLDSSQRGKKRKRVDDDAGGSAPAQHVPPPQLDHPGREAILYRFPLDLRRFIQAIGAAATVSFPMAQVCDVCFCPSHNKVSDLLPLVSAPRHASHRPVFRI</sequence>
<feature type="chain" id="PRO_0000116278" description="Uncharacterized protein BLRF3">
    <location>
        <begin position="1"/>
        <end position="153" status="greater than"/>
    </location>
</feature>
<feature type="region of interest" description="Disordered" evidence="1">
    <location>
        <begin position="1"/>
        <end position="88"/>
    </location>
</feature>
<feature type="non-terminal residue">
    <location>
        <position position="153"/>
    </location>
</feature>
<reference key="1">
    <citation type="journal article" date="1993" name="Virology">
        <title>The Epstein-Barr virus candidate vaccine antigen gp340/220 is highly conserved between virus types A and B.</title>
        <authorList>
            <person name="Lees J.F."/>
            <person name="Arrand J.E."/>
            <person name="Pepper S.V."/>
            <person name="Stewart J.P."/>
            <person name="Mackett M."/>
            <person name="Arrand J.R."/>
        </authorList>
    </citation>
    <scope>NUCLEOTIDE SEQUENCE [GENOMIC DNA]</scope>
</reference>
<evidence type="ECO:0000256" key="1">
    <source>
        <dbReference type="SAM" id="MobiDB-lite"/>
    </source>
</evidence>
<dbReference type="EMBL" id="L07922">
    <property type="protein sequence ID" value="AAA02785.2"/>
    <property type="molecule type" value="Genomic_DNA"/>
</dbReference>
<protein>
    <recommendedName>
        <fullName>Uncharacterized protein BLRF3</fullName>
    </recommendedName>
</protein>
<accession>Q07286</accession>
<proteinExistence type="predicted"/>
<gene>
    <name type="ORF">BLRF3</name>
</gene>